<organism>
    <name type="scientific">Caenorhabditis elegans</name>
    <dbReference type="NCBI Taxonomy" id="6239"/>
    <lineage>
        <taxon>Eukaryota</taxon>
        <taxon>Metazoa</taxon>
        <taxon>Ecdysozoa</taxon>
        <taxon>Nematoda</taxon>
        <taxon>Chromadorea</taxon>
        <taxon>Rhabditida</taxon>
        <taxon>Rhabditina</taxon>
        <taxon>Rhabditomorpha</taxon>
        <taxon>Rhabditoidea</taxon>
        <taxon>Rhabditidae</taxon>
        <taxon>Peloderinae</taxon>
        <taxon>Caenorhabditis</taxon>
    </lineage>
</organism>
<evidence type="ECO:0000255" key="1"/>
<evidence type="ECO:0000255" key="2">
    <source>
        <dbReference type="PROSITE-ProRule" id="PRU00199"/>
    </source>
</evidence>
<evidence type="ECO:0000256" key="3">
    <source>
        <dbReference type="SAM" id="MobiDB-lite"/>
    </source>
</evidence>
<evidence type="ECO:0000269" key="4">
    <source>
    </source>
</evidence>
<evidence type="ECO:0000269" key="5">
    <source>
    </source>
</evidence>
<evidence type="ECO:0000305" key="6"/>
<dbReference type="EMBL" id="Z46812">
    <property type="protein sequence ID" value="CAA86843.2"/>
    <property type="molecule type" value="Genomic_DNA"/>
</dbReference>
<dbReference type="PIR" id="T27969">
    <property type="entry name" value="T27969"/>
</dbReference>
<dbReference type="RefSeq" id="NP_495662.2">
    <property type="nucleotide sequence ID" value="NM_063261.6"/>
</dbReference>
<dbReference type="SMR" id="Q09614"/>
<dbReference type="BioGRID" id="39607">
    <property type="interactions" value="2"/>
</dbReference>
<dbReference type="FunCoup" id="Q09614">
    <property type="interactions" value="740"/>
</dbReference>
<dbReference type="STRING" id="6239.ZK675.1a.1"/>
<dbReference type="GlyCosmos" id="Q09614">
    <property type="glycosylation" value="3 sites, No reported glycans"/>
</dbReference>
<dbReference type="iPTMnet" id="Q09614"/>
<dbReference type="PaxDb" id="6239-ZK675.1.1"/>
<dbReference type="PeptideAtlas" id="Q09614"/>
<dbReference type="EnsemblMetazoa" id="ZK675.1a.1">
    <property type="protein sequence ID" value="ZK675.1a.1"/>
    <property type="gene ID" value="WBGene00004208"/>
</dbReference>
<dbReference type="GeneID" id="174274"/>
<dbReference type="KEGG" id="cel:CELE_ZK675.1"/>
<dbReference type="UCSC" id="ZK675.1.1">
    <property type="organism name" value="c. elegans"/>
</dbReference>
<dbReference type="AGR" id="WB:WBGene00004208"/>
<dbReference type="CTD" id="174274"/>
<dbReference type="WormBase" id="ZK675.1a">
    <property type="protein sequence ID" value="CE42497"/>
    <property type="gene ID" value="WBGene00004208"/>
    <property type="gene designation" value="ptc-1"/>
</dbReference>
<dbReference type="eggNOG" id="KOG1935">
    <property type="taxonomic scope" value="Eukaryota"/>
</dbReference>
<dbReference type="GeneTree" id="ENSGT00940000167988"/>
<dbReference type="HOGENOM" id="CLU_002506_1_0_1"/>
<dbReference type="InParanoid" id="Q09614"/>
<dbReference type="OMA" id="SYRRDVC"/>
<dbReference type="OrthoDB" id="5873834at2759"/>
<dbReference type="PhylomeDB" id="Q09614"/>
<dbReference type="Reactome" id="R-CEL-5632684">
    <property type="pathway name" value="Hedgehog 'on' state"/>
</dbReference>
<dbReference type="PRO" id="PR:Q09614"/>
<dbReference type="Proteomes" id="UP000001940">
    <property type="component" value="Chromosome II"/>
</dbReference>
<dbReference type="Bgee" id="WBGene00004208">
    <property type="expression patterns" value="Expressed in adult organism and 4 other cell types or tissues"/>
</dbReference>
<dbReference type="ExpressionAtlas" id="Q09614">
    <property type="expression patterns" value="baseline and differential"/>
</dbReference>
<dbReference type="GO" id="GO:0005886">
    <property type="term" value="C:plasma membrane"/>
    <property type="evidence" value="ECO:0000314"/>
    <property type="project" value="WormBase"/>
</dbReference>
<dbReference type="GO" id="GO:0097108">
    <property type="term" value="F:hedgehog family protein binding"/>
    <property type="evidence" value="ECO:0000318"/>
    <property type="project" value="GO_Central"/>
</dbReference>
<dbReference type="GO" id="GO:0008158">
    <property type="term" value="F:hedgehog receptor activity"/>
    <property type="evidence" value="ECO:0000318"/>
    <property type="project" value="GO_Central"/>
</dbReference>
<dbReference type="GO" id="GO:0005119">
    <property type="term" value="F:smoothened binding"/>
    <property type="evidence" value="ECO:0000318"/>
    <property type="project" value="GO_Central"/>
</dbReference>
<dbReference type="GO" id="GO:0051301">
    <property type="term" value="P:cell division"/>
    <property type="evidence" value="ECO:0007669"/>
    <property type="project" value="UniProtKB-KW"/>
</dbReference>
<dbReference type="GO" id="GO:0018996">
    <property type="term" value="P:molting cycle, collagen and cuticulin-based cuticle"/>
    <property type="evidence" value="ECO:0000315"/>
    <property type="project" value="WormBase"/>
</dbReference>
<dbReference type="GO" id="GO:0045879">
    <property type="term" value="P:negative regulation of smoothened signaling pathway"/>
    <property type="evidence" value="ECO:0000318"/>
    <property type="project" value="GO_Central"/>
</dbReference>
<dbReference type="FunFam" id="1.20.1640.10:FF:000031">
    <property type="entry name" value="PaTChed family"/>
    <property type="match status" value="1"/>
</dbReference>
<dbReference type="FunFam" id="1.20.1640.10:FF:000061">
    <property type="entry name" value="Protein patched homolog 1"/>
    <property type="match status" value="1"/>
</dbReference>
<dbReference type="Gene3D" id="1.20.1640.10">
    <property type="entry name" value="Multidrug efflux transporter AcrB transmembrane domain"/>
    <property type="match status" value="2"/>
</dbReference>
<dbReference type="InterPro" id="IPR053958">
    <property type="entry name" value="HMGCR/SNAP/NPC1-like_SSD"/>
</dbReference>
<dbReference type="InterPro" id="IPR000731">
    <property type="entry name" value="SSD"/>
</dbReference>
<dbReference type="PANTHER" id="PTHR46022">
    <property type="entry name" value="PROTEIN PATCHED"/>
    <property type="match status" value="1"/>
</dbReference>
<dbReference type="PANTHER" id="PTHR46022:SF1">
    <property type="entry name" value="PROTEIN PATCHED"/>
    <property type="match status" value="1"/>
</dbReference>
<dbReference type="Pfam" id="PF12349">
    <property type="entry name" value="Sterol-sensing"/>
    <property type="match status" value="1"/>
</dbReference>
<dbReference type="SUPFAM" id="SSF82866">
    <property type="entry name" value="Multidrug efflux transporter AcrB transmembrane domain"/>
    <property type="match status" value="2"/>
</dbReference>
<dbReference type="PROSITE" id="PS50156">
    <property type="entry name" value="SSD"/>
    <property type="match status" value="1"/>
</dbReference>
<accession>Q09614</accession>
<proteinExistence type="evidence at protein level"/>
<protein>
    <recommendedName>
        <fullName>Protein patched homolog 1</fullName>
    </recommendedName>
</protein>
<feature type="chain" id="PRO_0000205969" description="Protein patched homolog 1">
    <location>
        <begin position="1"/>
        <end position="1408"/>
    </location>
</feature>
<feature type="topological domain" description="Cytoplasmic" evidence="1">
    <location>
        <begin position="1"/>
        <end position="136"/>
    </location>
</feature>
<feature type="transmembrane region" description="Helical" evidence="1">
    <location>
        <begin position="137"/>
        <end position="157"/>
    </location>
</feature>
<feature type="topological domain" description="Extracellular" evidence="1">
    <location>
        <begin position="158"/>
        <end position="649"/>
    </location>
</feature>
<feature type="transmembrane region" description="Helical" evidence="1">
    <location>
        <begin position="650"/>
        <end position="670"/>
    </location>
</feature>
<feature type="topological domain" description="Cytoplasmic" evidence="1">
    <location>
        <begin position="671"/>
        <end position="686"/>
    </location>
</feature>
<feature type="transmembrane region" description="Helical" evidence="1">
    <location>
        <begin position="687"/>
        <end position="707"/>
    </location>
</feature>
<feature type="topological domain" description="Extracellular" evidence="1">
    <location>
        <begin position="708"/>
        <end position="709"/>
    </location>
</feature>
<feature type="transmembrane region" description="Helical" evidence="1">
    <location>
        <begin position="710"/>
        <end position="730"/>
    </location>
</feature>
<feature type="topological domain" description="Cytoplasmic" evidence="1">
    <location>
        <begin position="731"/>
        <end position="765"/>
    </location>
</feature>
<feature type="transmembrane region" description="Helical" evidence="1">
    <location>
        <begin position="766"/>
        <end position="786"/>
    </location>
</feature>
<feature type="topological domain" description="Extracellular" evidence="1">
    <location>
        <begin position="787"/>
        <end position="795"/>
    </location>
</feature>
<feature type="transmembrane region" description="Helical" evidence="1">
    <location>
        <begin position="796"/>
        <end position="816"/>
    </location>
</feature>
<feature type="topological domain" description="Cytoplasmic" evidence="1">
    <location>
        <begin position="817"/>
        <end position="901"/>
    </location>
</feature>
<feature type="transmembrane region" description="Helical" evidence="1">
    <location>
        <begin position="902"/>
        <end position="922"/>
    </location>
</feature>
<feature type="topological domain" description="Extracellular" evidence="1">
    <location>
        <begin position="923"/>
        <end position="1175"/>
    </location>
</feature>
<feature type="transmembrane region" description="Helical" evidence="1">
    <location>
        <begin position="1176"/>
        <end position="1196"/>
    </location>
</feature>
<feature type="topological domain" description="Cytoplasmic" evidence="1">
    <location>
        <begin position="1197"/>
        <end position="1217"/>
    </location>
</feature>
<feature type="transmembrane region" description="Helical" evidence="1">
    <location>
        <begin position="1218"/>
        <end position="1238"/>
    </location>
</feature>
<feature type="transmembrane region" description="Helical" evidence="1">
    <location>
        <begin position="1239"/>
        <end position="1259"/>
    </location>
</feature>
<feature type="topological domain" description="Extracellular" evidence="1">
    <location>
        <begin position="1260"/>
        <end position="1276"/>
    </location>
</feature>
<feature type="transmembrane region" description="Helical" evidence="1">
    <location>
        <begin position="1277"/>
        <end position="1297"/>
    </location>
</feature>
<feature type="topological domain" description="Cytoplasmic" evidence="1">
    <location>
        <begin position="1298"/>
        <end position="1305"/>
    </location>
</feature>
<feature type="transmembrane region" description="Helical" evidence="1">
    <location>
        <begin position="1306"/>
        <end position="1326"/>
    </location>
</feature>
<feature type="topological domain" description="Extracellular" evidence="1">
    <location>
        <begin position="1327"/>
        <end position="1408"/>
    </location>
</feature>
<feature type="domain" description="SSD" evidence="2">
    <location>
        <begin position="654"/>
        <end position="816"/>
    </location>
</feature>
<feature type="region of interest" description="Disordered" evidence="3">
    <location>
        <begin position="1"/>
        <end position="20"/>
    </location>
</feature>
<feature type="region of interest" description="Disordered" evidence="3">
    <location>
        <begin position="455"/>
        <end position="479"/>
    </location>
</feature>
<feature type="region of interest" description="Disordered" evidence="3">
    <location>
        <begin position="1342"/>
        <end position="1408"/>
    </location>
</feature>
<feature type="compositionally biased region" description="Basic and acidic residues" evidence="3">
    <location>
        <begin position="468"/>
        <end position="479"/>
    </location>
</feature>
<feature type="compositionally biased region" description="Low complexity" evidence="3">
    <location>
        <begin position="1387"/>
        <end position="1408"/>
    </location>
</feature>
<feature type="glycosylation site" description="N-linked (GlcNAc...) asparagine" evidence="5">
    <location>
        <position position="599"/>
    </location>
</feature>
<feature type="glycosylation site" description="N-linked (GlcNAc...) asparagine" evidence="5">
    <location>
        <position position="1026"/>
    </location>
</feature>
<feature type="glycosylation site" description="N-linked (GlcNAc...) asparagine" evidence="5">
    <location>
        <position position="1036"/>
    </location>
</feature>
<reference evidence="6" key="1">
    <citation type="journal article" date="2000" name="Genes Dev.">
        <title>A C. elegans patched gene, ptc-1, functions in germ-line cytokinesis.</title>
        <authorList>
            <person name="Kuwabara P.E."/>
            <person name="Lee M.-H."/>
            <person name="Schedl T."/>
            <person name="Jefferis G.S.X.E."/>
        </authorList>
    </citation>
    <scope>NUCLEOTIDE SEQUENCE [GENOMIC DNA]</scope>
    <scope>FUNCTION</scope>
    <scope>SUBCELLULAR LOCATION</scope>
    <scope>TISSUE SPECIFICITY</scope>
    <scope>DEVELOPMENTAL STAGE</scope>
</reference>
<reference key="2">
    <citation type="journal article" date="1998" name="Science">
        <title>Genome sequence of the nematode C. elegans: a platform for investigating biology.</title>
        <authorList>
            <consortium name="The C. elegans sequencing consortium"/>
        </authorList>
    </citation>
    <scope>NUCLEOTIDE SEQUENCE [LARGE SCALE GENOMIC DNA]</scope>
    <source>
        <strain>Bristol N2</strain>
    </source>
</reference>
<reference key="3">
    <citation type="journal article" date="2007" name="Mol. Cell. Proteomics">
        <title>Proteomics reveals N-linked glycoprotein diversity in Caenorhabditis elegans and suggests an atypical translocation mechanism for integral membrane proteins.</title>
        <authorList>
            <person name="Kaji H."/>
            <person name="Kamiie J."/>
            <person name="Kawakami H."/>
            <person name="Kido K."/>
            <person name="Yamauchi Y."/>
            <person name="Shinkawa T."/>
            <person name="Taoka M."/>
            <person name="Takahashi N."/>
            <person name="Isobe T."/>
        </authorList>
    </citation>
    <scope>GLYCOSYLATION [LARGE SCALE ANALYSIS] AT ASN-599; ASN-1026 AND ASN-1036</scope>
    <scope>IDENTIFICATION BY MASS SPECTROMETRY</scope>
    <source>
        <strain>Bristol N2</strain>
    </source>
</reference>
<keyword id="KW-0131">Cell cycle</keyword>
<keyword id="KW-0132">Cell division</keyword>
<keyword id="KW-0325">Glycoprotein</keyword>
<keyword id="KW-0472">Membrane</keyword>
<keyword id="KW-0498">Mitosis</keyword>
<keyword id="KW-1185">Reference proteome</keyword>
<keyword id="KW-0812">Transmembrane</keyword>
<keyword id="KW-1133">Transmembrane helix</keyword>
<sequence>MLTLLEPPGAKRSPTVGNYNNRSAQHLLNLAPEEDDLYETYEETEDYAENEPTGNILTRSFQFLDQYLVGQSSSADYNDRWKREFRARPSWCDADLCLQQMNRGKATGNRYALYSRSLIQKLLFALGNTVHRNAWSIILAVSMIFAVCCYGLQYVHIETDIVKLWVAQGGRLDEELNFLPNIKEAMRNVTGDSGPELPRENGLGGGYQVLIQTPEYEGQDALAAGPLLKHVEIMKHIASFNVSVHGVDWSLSDICFKPAPPSVAADSAASSLGDVIDKIVPCIWITPIDCFWEGSKALGPHPSLPKSSLGPLGMLLSSLSDGDMIRWSDFDPIAVIDEIHRSFNLGSHYTFFERAGVSHGYMDRPCIDPLDPECPPMAKNYFDVCPHIDRVREIAKKYGTELEEEKKKDSGYSFFDFLGRKKREAGDQPKMIHPAQPADSIPTIEDAVPAQVPVSTAPIPTTTTLSPEEARAAEEKEKKQKARELKDYCKSYRKSAFEWLKKNKDKWPEVMSENMYPQNVDYAAEMTGGCSGFASNVLNWPEDMILGNPRRAKKGGKLSGADALQSVFLVASPADVFLRFKQKPGRNSMKTGLDMDAWNETAAEQVLQAWQRNFTKSLYNHKANVDEDGNERRTLHPLASTSIADMLEEFCQFNYTIILAGYALMLAYAIVTQARFDNCLPATESSMGLALAGVLVVTFASVAGLGLATWFGIEFNAATTQIVPFLTLGIGVDNMFMLLHNYRDVVKLAGGHAEMAILMRETGMSILCTSINNILSFLTGTLLPIPALRSFCAQSSILLTFNFIAILTIYPAIISIDLRRKKAQRRDLVCCLYGDTREESYSMISKPKIQSKRIIGAPSEASIMQQFDGITQAQMASSDDPAPWSLHSFIRYYYIPFISKPASKVAIIVGCCALLGASFIGMRQSTLGLELGDVLPEHTAPAQFLRARDKYFSFYPMFAVIKGPNIDYAHQQRQIDNYRQSIGSSKYVIKNKNEEPSEKYWLGLMRDWLISIQRGFDEEVAKGSFNLTSGTVIGSNVSEDARLAHALMCSHGSLFGCAGRVGKIRLVDASGIINSDGFYNYLTAWFNVDHMMYYVSQASFFPTPPKWELSKNHTENFIPAAEPLAYSQIPFYLTGLTDTAVIVDAIKDIRSVCERFTDQGLPNFPQGIAFTFWEQYLFLTGNLMQAISIITISVFCVISVLLFNPWAALMVVCILGIMTCELAGFMGLVGIKLNPVSAVTLITAVGIGVEFTVHVVVSFLTALGTRSQRTSSAVDRVFVPVIHGSFSTLLGILMLGFSEFEFVVKYFFIVMTALICIGIINGLILLPVLLSWFGPRREISPTGGKTTLTLPPPLPKNANSSRSGGDDSDEDDEPSGLVMYSRQAPPTTRTSGGNRGTVGNNTRRLPAV</sequence>
<gene>
    <name type="primary">ptc-1</name>
    <name type="ORF">ZK675.1</name>
</gene>
<name>PTC1_CAEEL</name>
<comment type="function">
    <text evidence="4">Required but not essential for cytokinesis of mitotically proliferating germ cells.</text>
</comment>
<comment type="subcellular location">
    <subcellularLocation>
        <location evidence="4">Membrane</location>
        <topology evidence="4">Multi-pass membrane protein</topology>
    </subcellularLocation>
    <text>Highly concentrated in a punctate pattern at the apices and internal membranes adjacent to the rachis. Expression is more intense in the distal proliferative region and in oocytes of the gonad arm.</text>
</comment>
<comment type="tissue specificity">
    <text evidence="4">Germ line and its progenitors.</text>
</comment>
<comment type="developmental stage">
    <text evidence="4">Expressed both maternally and zygotically.</text>
</comment>
<comment type="miscellaneous">
    <text evidence="4">Membrane proteins Patch and Smoothened form a receptor complex that binds Hedgehog morphogens. Despite the lack of Hh and Smo homologs, ptc-1 is still found to be functional. Absence of ptc-1 leads to the formation of multinucleate germ cells and sterility.</text>
</comment>
<comment type="similarity">
    <text evidence="6">Belongs to the patched family.</text>
</comment>